<reference key="1">
    <citation type="journal article" date="2005" name="PLoS Biol.">
        <title>The genomes of Oryza sativa: a history of duplications.</title>
        <authorList>
            <person name="Yu J."/>
            <person name="Wang J."/>
            <person name="Lin W."/>
            <person name="Li S."/>
            <person name="Li H."/>
            <person name="Zhou J."/>
            <person name="Ni P."/>
            <person name="Dong W."/>
            <person name="Hu S."/>
            <person name="Zeng C."/>
            <person name="Zhang J."/>
            <person name="Zhang Y."/>
            <person name="Li R."/>
            <person name="Xu Z."/>
            <person name="Li S."/>
            <person name="Li X."/>
            <person name="Zheng H."/>
            <person name="Cong L."/>
            <person name="Lin L."/>
            <person name="Yin J."/>
            <person name="Geng J."/>
            <person name="Li G."/>
            <person name="Shi J."/>
            <person name="Liu J."/>
            <person name="Lv H."/>
            <person name="Li J."/>
            <person name="Wang J."/>
            <person name="Deng Y."/>
            <person name="Ran L."/>
            <person name="Shi X."/>
            <person name="Wang X."/>
            <person name="Wu Q."/>
            <person name="Li C."/>
            <person name="Ren X."/>
            <person name="Wang J."/>
            <person name="Wang X."/>
            <person name="Li D."/>
            <person name="Liu D."/>
            <person name="Zhang X."/>
            <person name="Ji Z."/>
            <person name="Zhao W."/>
            <person name="Sun Y."/>
            <person name="Zhang Z."/>
            <person name="Bao J."/>
            <person name="Han Y."/>
            <person name="Dong L."/>
            <person name="Ji J."/>
            <person name="Chen P."/>
            <person name="Wu S."/>
            <person name="Liu J."/>
            <person name="Xiao Y."/>
            <person name="Bu D."/>
            <person name="Tan J."/>
            <person name="Yang L."/>
            <person name="Ye C."/>
            <person name="Zhang J."/>
            <person name="Xu J."/>
            <person name="Zhou Y."/>
            <person name="Yu Y."/>
            <person name="Zhang B."/>
            <person name="Zhuang S."/>
            <person name="Wei H."/>
            <person name="Liu B."/>
            <person name="Lei M."/>
            <person name="Yu H."/>
            <person name="Li Y."/>
            <person name="Xu H."/>
            <person name="Wei S."/>
            <person name="He X."/>
            <person name="Fang L."/>
            <person name="Zhang Z."/>
            <person name="Zhang Y."/>
            <person name="Huang X."/>
            <person name="Su Z."/>
            <person name="Tong W."/>
            <person name="Li J."/>
            <person name="Tong Z."/>
            <person name="Li S."/>
            <person name="Ye J."/>
            <person name="Wang L."/>
            <person name="Fang L."/>
            <person name="Lei T."/>
            <person name="Chen C.-S."/>
            <person name="Chen H.-C."/>
            <person name="Xu Z."/>
            <person name="Li H."/>
            <person name="Huang H."/>
            <person name="Zhang F."/>
            <person name="Xu H."/>
            <person name="Li N."/>
            <person name="Zhao C."/>
            <person name="Li S."/>
            <person name="Dong L."/>
            <person name="Huang Y."/>
            <person name="Li L."/>
            <person name="Xi Y."/>
            <person name="Qi Q."/>
            <person name="Li W."/>
            <person name="Zhang B."/>
            <person name="Hu W."/>
            <person name="Zhang Y."/>
            <person name="Tian X."/>
            <person name="Jiao Y."/>
            <person name="Liang X."/>
            <person name="Jin J."/>
            <person name="Gao L."/>
            <person name="Zheng W."/>
            <person name="Hao B."/>
            <person name="Liu S.-M."/>
            <person name="Wang W."/>
            <person name="Yuan L."/>
            <person name="Cao M."/>
            <person name="McDermott J."/>
            <person name="Samudrala R."/>
            <person name="Wang J."/>
            <person name="Wong G.K.-S."/>
            <person name="Yang H."/>
        </authorList>
    </citation>
    <scope>NUCLEOTIDE SEQUENCE [LARGE SCALE GENOMIC DNA]</scope>
    <source>
        <strain>cv. 93-11</strain>
    </source>
</reference>
<feature type="chain" id="PRO_0000412946" description="PHD finger protein ALFIN-LIKE 6">
    <location>
        <begin position="1"/>
        <end position="272"/>
    </location>
</feature>
<feature type="zinc finger region" description="PHD-type" evidence="2">
    <location>
        <begin position="216"/>
        <end position="268"/>
    </location>
</feature>
<feature type="region of interest" description="Disordered" evidence="3">
    <location>
        <begin position="1"/>
        <end position="24"/>
    </location>
</feature>
<feature type="region of interest" description="Disordered" evidence="3">
    <location>
        <begin position="162"/>
        <end position="218"/>
    </location>
</feature>
<feature type="compositionally biased region" description="Gly residues" evidence="3">
    <location>
        <begin position="1"/>
        <end position="23"/>
    </location>
</feature>
<feature type="compositionally biased region" description="Low complexity" evidence="3">
    <location>
        <begin position="168"/>
        <end position="182"/>
    </location>
</feature>
<feature type="compositionally biased region" description="Basic and acidic residues" evidence="3">
    <location>
        <begin position="183"/>
        <end position="200"/>
    </location>
</feature>
<feature type="compositionally biased region" description="Acidic residues" evidence="3">
    <location>
        <begin position="201"/>
        <end position="214"/>
    </location>
</feature>
<feature type="site" description="Histone H3K4me3 binding" evidence="1">
    <location>
        <position position="232"/>
    </location>
</feature>
<feature type="site" description="Histone H3K4me3 binding" evidence="1">
    <location>
        <position position="236"/>
    </location>
</feature>
<feature type="site" description="Histone H3K4me3 binding" evidence="1">
    <location>
        <position position="241"/>
    </location>
</feature>
<dbReference type="EMBL" id="CM000126">
    <property type="protein sequence ID" value="EAY76761.1"/>
    <property type="molecule type" value="Genomic_DNA"/>
</dbReference>
<dbReference type="SMR" id="A2WXR5"/>
<dbReference type="STRING" id="39946.A2WXR5"/>
<dbReference type="EnsemblPlants" id="BGIOSGA000361-TA">
    <property type="protein sequence ID" value="BGIOSGA000361-PA"/>
    <property type="gene ID" value="BGIOSGA000361"/>
</dbReference>
<dbReference type="EnsemblPlants" id="OsGoSa_01g0042150.01">
    <property type="protein sequence ID" value="OsGoSa_01g0042150.01"/>
    <property type="gene ID" value="OsGoSa_01g0042150"/>
</dbReference>
<dbReference type="EnsemblPlants" id="OsIR64_01g0041570.01">
    <property type="protein sequence ID" value="OsIR64_01g0041570.01"/>
    <property type="gene ID" value="OsIR64_01g0041570"/>
</dbReference>
<dbReference type="EnsemblPlants" id="OsLaMu_01g0041960.02">
    <property type="protein sequence ID" value="OsLaMu_01g0041960.02"/>
    <property type="gene ID" value="OsLaMu_01g0041960"/>
</dbReference>
<dbReference type="EnsemblPlants" id="OsLiXu_01g0042080.01">
    <property type="protein sequence ID" value="OsLiXu_01g0042080.01"/>
    <property type="gene ID" value="OsLiXu_01g0042080"/>
</dbReference>
<dbReference type="EnsemblPlants" id="OsMH63_01G042770_01">
    <property type="protein sequence ID" value="OsMH63_01G042770_01"/>
    <property type="gene ID" value="OsMH63_01G042770"/>
</dbReference>
<dbReference type="EnsemblPlants" id="OsPr106_01g0041940.01">
    <property type="protein sequence ID" value="OsPr106_01g0041940.01"/>
    <property type="gene ID" value="OsPr106_01g0041940"/>
</dbReference>
<dbReference type="EnsemblPlants" id="OsZS97_01G042130_01">
    <property type="protein sequence ID" value="OsZS97_01G042130_01"/>
    <property type="gene ID" value="OsZS97_01G042130"/>
</dbReference>
<dbReference type="Gramene" id="BGIOSGA000361-TA">
    <property type="protein sequence ID" value="BGIOSGA000361-PA"/>
    <property type="gene ID" value="BGIOSGA000361"/>
</dbReference>
<dbReference type="Gramene" id="OsGoSa_01g0042150.01">
    <property type="protein sequence ID" value="OsGoSa_01g0042150.01"/>
    <property type="gene ID" value="OsGoSa_01g0042150"/>
</dbReference>
<dbReference type="Gramene" id="OsIR64_01g0041570.01">
    <property type="protein sequence ID" value="OsIR64_01g0041570.01"/>
    <property type="gene ID" value="OsIR64_01g0041570"/>
</dbReference>
<dbReference type="Gramene" id="OsLaMu_01g0041960.02">
    <property type="protein sequence ID" value="OsLaMu_01g0041960.02"/>
    <property type="gene ID" value="OsLaMu_01g0041960"/>
</dbReference>
<dbReference type="Gramene" id="OsLiXu_01g0042080.01">
    <property type="protein sequence ID" value="OsLiXu_01g0042080.01"/>
    <property type="gene ID" value="OsLiXu_01g0042080"/>
</dbReference>
<dbReference type="Gramene" id="OsMH63_01G042770_01">
    <property type="protein sequence ID" value="OsMH63_01G042770_01"/>
    <property type="gene ID" value="OsMH63_01G042770"/>
</dbReference>
<dbReference type="Gramene" id="OsPr106_01g0041940.01">
    <property type="protein sequence ID" value="OsPr106_01g0041940.01"/>
    <property type="gene ID" value="OsPr106_01g0041940"/>
</dbReference>
<dbReference type="Gramene" id="OsZS97_01G042130_01">
    <property type="protein sequence ID" value="OsZS97_01G042130_01"/>
    <property type="gene ID" value="OsZS97_01G042130"/>
</dbReference>
<dbReference type="HOGENOM" id="CLU_058315_0_0_1"/>
<dbReference type="OMA" id="HMINDLP"/>
<dbReference type="OrthoDB" id="436852at2759"/>
<dbReference type="Proteomes" id="UP000007015">
    <property type="component" value="Chromosome 1"/>
</dbReference>
<dbReference type="GO" id="GO:0005634">
    <property type="term" value="C:nucleus"/>
    <property type="evidence" value="ECO:0007669"/>
    <property type="project" value="UniProtKB-SubCell"/>
</dbReference>
<dbReference type="GO" id="GO:0042393">
    <property type="term" value="F:histone binding"/>
    <property type="evidence" value="ECO:0007669"/>
    <property type="project" value="InterPro"/>
</dbReference>
<dbReference type="GO" id="GO:0000976">
    <property type="term" value="F:transcription cis-regulatory region binding"/>
    <property type="evidence" value="ECO:0007669"/>
    <property type="project" value="TreeGrafter"/>
</dbReference>
<dbReference type="GO" id="GO:0003712">
    <property type="term" value="F:transcription coregulator activity"/>
    <property type="evidence" value="ECO:0007669"/>
    <property type="project" value="TreeGrafter"/>
</dbReference>
<dbReference type="GO" id="GO:0008270">
    <property type="term" value="F:zinc ion binding"/>
    <property type="evidence" value="ECO:0007669"/>
    <property type="project" value="UniProtKB-KW"/>
</dbReference>
<dbReference type="GO" id="GO:0006325">
    <property type="term" value="P:chromatin organization"/>
    <property type="evidence" value="ECO:0007669"/>
    <property type="project" value="UniProtKB-KW"/>
</dbReference>
<dbReference type="GO" id="GO:0006355">
    <property type="term" value="P:regulation of DNA-templated transcription"/>
    <property type="evidence" value="ECO:0007669"/>
    <property type="project" value="InterPro"/>
</dbReference>
<dbReference type="CDD" id="cd15613">
    <property type="entry name" value="PHD_AL_plant"/>
    <property type="match status" value="1"/>
</dbReference>
<dbReference type="FunFam" id="3.30.40.10:FF:000306">
    <property type="entry name" value="PHD finger alfin-like protein"/>
    <property type="match status" value="1"/>
</dbReference>
<dbReference type="Gene3D" id="3.30.40.10">
    <property type="entry name" value="Zinc/RING finger domain, C3HC4 (zinc finger)"/>
    <property type="match status" value="1"/>
</dbReference>
<dbReference type="InterPro" id="IPR045104">
    <property type="entry name" value="Alfin"/>
</dbReference>
<dbReference type="InterPro" id="IPR021998">
    <property type="entry name" value="Alfin_N"/>
</dbReference>
<dbReference type="InterPro" id="IPR044104">
    <property type="entry name" value="PHD_AL_plant"/>
</dbReference>
<dbReference type="InterPro" id="IPR019786">
    <property type="entry name" value="Zinc_finger_PHD-type_CS"/>
</dbReference>
<dbReference type="InterPro" id="IPR011011">
    <property type="entry name" value="Znf_FYVE_PHD"/>
</dbReference>
<dbReference type="InterPro" id="IPR001965">
    <property type="entry name" value="Znf_PHD"/>
</dbReference>
<dbReference type="InterPro" id="IPR019787">
    <property type="entry name" value="Znf_PHD-finger"/>
</dbReference>
<dbReference type="InterPro" id="IPR013083">
    <property type="entry name" value="Znf_RING/FYVE/PHD"/>
</dbReference>
<dbReference type="PANTHER" id="PTHR12321">
    <property type="entry name" value="CPG BINDING PROTEIN"/>
    <property type="match status" value="1"/>
</dbReference>
<dbReference type="PANTHER" id="PTHR12321:SF77">
    <property type="entry name" value="PHD FINGER PROTEIN ALFIN-LIKE 6"/>
    <property type="match status" value="1"/>
</dbReference>
<dbReference type="Pfam" id="PF12165">
    <property type="entry name" value="Alfin"/>
    <property type="match status" value="1"/>
</dbReference>
<dbReference type="Pfam" id="PF00628">
    <property type="entry name" value="PHD"/>
    <property type="match status" value="1"/>
</dbReference>
<dbReference type="SMART" id="SM00249">
    <property type="entry name" value="PHD"/>
    <property type="match status" value="1"/>
</dbReference>
<dbReference type="SUPFAM" id="SSF57903">
    <property type="entry name" value="FYVE/PHD zinc finger"/>
    <property type="match status" value="1"/>
</dbReference>
<dbReference type="PROSITE" id="PS01359">
    <property type="entry name" value="ZF_PHD_1"/>
    <property type="match status" value="1"/>
</dbReference>
<dbReference type="PROSITE" id="PS50016">
    <property type="entry name" value="ZF_PHD_2"/>
    <property type="match status" value="1"/>
</dbReference>
<proteinExistence type="inferred from homology"/>
<name>ALFL6_ORYSI</name>
<keyword id="KW-0156">Chromatin regulator</keyword>
<keyword id="KW-0479">Metal-binding</keyword>
<keyword id="KW-0539">Nucleus</keyword>
<keyword id="KW-1185">Reference proteome</keyword>
<keyword id="KW-0804">Transcription</keyword>
<keyword id="KW-0805">Transcription regulation</keyword>
<keyword id="KW-0862">Zinc</keyword>
<keyword id="KW-0863">Zinc-finger</keyword>
<gene>
    <name type="ORF">OsI_04717</name>
</gene>
<accession>A2WXR5</accession>
<protein>
    <recommendedName>
        <fullName>PHD finger protein ALFIN-LIKE 6</fullName>
    </recommendedName>
</protein>
<evidence type="ECO:0000250" key="1"/>
<evidence type="ECO:0000255" key="2">
    <source>
        <dbReference type="PROSITE-ProRule" id="PRU00146"/>
    </source>
</evidence>
<evidence type="ECO:0000256" key="3">
    <source>
        <dbReference type="SAM" id="MobiDB-lite"/>
    </source>
</evidence>
<evidence type="ECO:0000305" key="4"/>
<organism>
    <name type="scientific">Oryza sativa subsp. indica</name>
    <name type="common">Rice</name>
    <dbReference type="NCBI Taxonomy" id="39946"/>
    <lineage>
        <taxon>Eukaryota</taxon>
        <taxon>Viridiplantae</taxon>
        <taxon>Streptophyta</taxon>
        <taxon>Embryophyta</taxon>
        <taxon>Tracheophyta</taxon>
        <taxon>Spermatophyta</taxon>
        <taxon>Magnoliopsida</taxon>
        <taxon>Liliopsida</taxon>
        <taxon>Poales</taxon>
        <taxon>Poaceae</taxon>
        <taxon>BOP clade</taxon>
        <taxon>Oryzoideae</taxon>
        <taxon>Oryzeae</taxon>
        <taxon>Oryzinae</taxon>
        <taxon>Oryza</taxon>
        <taxon>Oryza sativa</taxon>
    </lineage>
</organism>
<sequence>MEGGGGGGGGGGGGGGGGGGGGAPYATRTAEEVFRDLRGRRAGMIKALTTDVEKFYKLCDPEKENLCLYGYPNETWEVTLPAEEVPPEIPEPALGINFARDGMNEKDWLALVAVHSDSWLLSVAFYFGARFGFDREARRRLFNMINNLPTIFEVVTGAAKKQAKEKTPNSSSKSNKPSSKVQSKAESRSKSKLSAPKDEEGSGDDEGEEEEDDHDNTLCGTCGTNDGKDEFWICCDNCEKWYHGKCVKITPARAEHIKQYKCPDCTNKRTRA</sequence>
<comment type="function">
    <text evidence="1">Histone-binding component that specifically recognizes H3 tails trimethylated on 'Lys-4' (H3K4me3), which mark transcription start sites of virtually all active genes.</text>
</comment>
<comment type="subcellular location">
    <subcellularLocation>
        <location evidence="1">Nucleus</location>
    </subcellularLocation>
</comment>
<comment type="domain">
    <text evidence="1">The PHD-type zinc finger mediates the binding to H3K4me3.</text>
</comment>
<comment type="similarity">
    <text evidence="4">Belongs to the Alfin family.</text>
</comment>
<comment type="caution">
    <text evidence="4">Lacks the Tyr (here Asp-226), a conserved feature of the aromatic cage required for the interaction with histone H3K4me3/2.</text>
</comment>